<feature type="chain" id="PRO_0000315733" description="Metallophosphoesterase 1">
    <location>
        <begin position="1"/>
        <end position="405"/>
    </location>
</feature>
<feature type="transmembrane region" description="Helical" evidence="2">
    <location>
        <begin position="31"/>
        <end position="51"/>
    </location>
</feature>
<feature type="transmembrane region" description="Helical" evidence="2">
    <location>
        <begin position="369"/>
        <end position="389"/>
    </location>
</feature>
<feature type="binding site" evidence="1">
    <location>
        <position position="78"/>
    </location>
    <ligand>
        <name>a divalent metal cation</name>
        <dbReference type="ChEBI" id="CHEBI:60240"/>
        <label>2</label>
    </ligand>
</feature>
<feature type="binding site" evidence="1">
    <location>
        <position position="120"/>
    </location>
    <ligand>
        <name>a divalent metal cation</name>
        <dbReference type="ChEBI" id="CHEBI:60240"/>
        <label>1</label>
    </ligand>
</feature>
<feature type="binding site" evidence="1">
    <location>
        <position position="120"/>
    </location>
    <ligand>
        <name>a divalent metal cation</name>
        <dbReference type="ChEBI" id="CHEBI:60240"/>
        <label>2</label>
    </ligand>
</feature>
<feature type="binding site" evidence="1">
    <location>
        <position position="158"/>
    </location>
    <ligand>
        <name>a divalent metal cation</name>
        <dbReference type="ChEBI" id="CHEBI:60240"/>
        <label>1</label>
    </ligand>
</feature>
<feature type="binding site" evidence="1">
    <location>
        <position position="261"/>
    </location>
    <ligand>
        <name>a divalent metal cation</name>
        <dbReference type="ChEBI" id="CHEBI:60240"/>
        <label>1</label>
    </ligand>
</feature>
<feature type="binding site" evidence="1">
    <location>
        <position position="261"/>
    </location>
    <ligand>
        <name>a divalent metal cation</name>
        <dbReference type="ChEBI" id="CHEBI:60240"/>
        <label>2</label>
    </ligand>
</feature>
<feature type="binding site" evidence="1">
    <location>
        <position position="315"/>
    </location>
    <ligand>
        <name>a divalent metal cation</name>
        <dbReference type="ChEBI" id="CHEBI:60240"/>
        <label>1</label>
    </ligand>
</feature>
<feature type="binding site" evidence="1">
    <location>
        <position position="317"/>
    </location>
    <ligand>
        <name>a divalent metal cation</name>
        <dbReference type="ChEBI" id="CHEBI:60240"/>
        <label>2</label>
    </ligand>
</feature>
<gene>
    <name evidence="1" type="primary">mppe1</name>
    <name evidence="1" type="synonym">pgap5</name>
</gene>
<keyword id="KW-0931">ER-Golgi transport</keyword>
<keyword id="KW-0337">GPI-anchor biosynthesis</keyword>
<keyword id="KW-0378">Hydrolase</keyword>
<keyword id="KW-0464">Manganese</keyword>
<keyword id="KW-0472">Membrane</keyword>
<keyword id="KW-0479">Metal-binding</keyword>
<keyword id="KW-1185">Reference proteome</keyword>
<keyword id="KW-0812">Transmembrane</keyword>
<keyword id="KW-1133">Transmembrane helix</keyword>
<keyword id="KW-0813">Transport</keyword>
<dbReference type="EC" id="3.1.-.-" evidence="1"/>
<dbReference type="EMBL" id="BC123239">
    <property type="protein sequence ID" value="AAI23240.1"/>
    <property type="molecule type" value="mRNA"/>
</dbReference>
<dbReference type="RefSeq" id="NP_001090362.1">
    <property type="nucleotide sequence ID" value="NM_001096893.1"/>
</dbReference>
<dbReference type="DNASU" id="779273"/>
<dbReference type="GeneID" id="779273"/>
<dbReference type="KEGG" id="xla:779273"/>
<dbReference type="AGR" id="Xenbase:XB-GENE-987931"/>
<dbReference type="CTD" id="779273"/>
<dbReference type="Xenbase" id="XB-GENE-987931">
    <property type="gene designation" value="mppe1.L"/>
</dbReference>
<dbReference type="OMA" id="LHCMKYP"/>
<dbReference type="OrthoDB" id="9984693at2759"/>
<dbReference type="Proteomes" id="UP000186698">
    <property type="component" value="Chromosome 6L"/>
</dbReference>
<dbReference type="Bgee" id="779273">
    <property type="expression patterns" value="Expressed in muscle tissue and 18 other cell types or tissues"/>
</dbReference>
<dbReference type="GO" id="GO:0070971">
    <property type="term" value="C:endoplasmic reticulum exit site"/>
    <property type="evidence" value="ECO:0000250"/>
    <property type="project" value="UniProtKB"/>
</dbReference>
<dbReference type="GO" id="GO:0033116">
    <property type="term" value="C:endoplasmic reticulum-Golgi intermediate compartment membrane"/>
    <property type="evidence" value="ECO:0007669"/>
    <property type="project" value="UniProtKB-SubCell"/>
</dbReference>
<dbReference type="GO" id="GO:0005794">
    <property type="term" value="C:Golgi apparatus"/>
    <property type="evidence" value="ECO:0007669"/>
    <property type="project" value="UniProtKB-SubCell"/>
</dbReference>
<dbReference type="GO" id="GO:0062050">
    <property type="term" value="F:GPI-mannose ethanolamine phosphate phosphodiesterase activity"/>
    <property type="evidence" value="ECO:0000250"/>
    <property type="project" value="UniProtKB"/>
</dbReference>
<dbReference type="GO" id="GO:0030145">
    <property type="term" value="F:manganese ion binding"/>
    <property type="evidence" value="ECO:0000250"/>
    <property type="project" value="UniProtKB"/>
</dbReference>
<dbReference type="GO" id="GO:0006888">
    <property type="term" value="P:endoplasmic reticulum to Golgi vesicle-mediated transport"/>
    <property type="evidence" value="ECO:0000250"/>
    <property type="project" value="UniProtKB"/>
</dbReference>
<dbReference type="GO" id="GO:0006506">
    <property type="term" value="P:GPI anchor biosynthetic process"/>
    <property type="evidence" value="ECO:0000250"/>
    <property type="project" value="UniProtKB"/>
</dbReference>
<dbReference type="CDD" id="cd08165">
    <property type="entry name" value="MPP_MPPE1"/>
    <property type="match status" value="1"/>
</dbReference>
<dbReference type="FunFam" id="3.60.21.10:FF:000022">
    <property type="entry name" value="Putative metallophosphoesterase 1"/>
    <property type="match status" value="1"/>
</dbReference>
<dbReference type="Gene3D" id="3.60.21.10">
    <property type="match status" value="1"/>
</dbReference>
<dbReference type="InterPro" id="IPR004843">
    <property type="entry name" value="Calcineurin-like_PHP_ApaH"/>
</dbReference>
<dbReference type="InterPro" id="IPR029052">
    <property type="entry name" value="Metallo-depent_PP-like"/>
</dbReference>
<dbReference type="InterPro" id="IPR039541">
    <property type="entry name" value="MPP_MPPE1"/>
</dbReference>
<dbReference type="InterPro" id="IPR033308">
    <property type="entry name" value="PGAP5/Cdc1/Ted1"/>
</dbReference>
<dbReference type="PANTHER" id="PTHR13315">
    <property type="entry name" value="METALLO PHOSPHOESTERASE RELATED"/>
    <property type="match status" value="1"/>
</dbReference>
<dbReference type="PANTHER" id="PTHR13315:SF0">
    <property type="entry name" value="METALLOPHOSPHOESTERASE 1"/>
    <property type="match status" value="1"/>
</dbReference>
<dbReference type="Pfam" id="PF00149">
    <property type="entry name" value="Metallophos"/>
    <property type="match status" value="1"/>
</dbReference>
<dbReference type="SUPFAM" id="SSF56300">
    <property type="entry name" value="Metallo-dependent phosphatases"/>
    <property type="match status" value="1"/>
</dbReference>
<accession>Q0IHA5</accession>
<proteinExistence type="evidence at transcript level"/>
<reference key="1">
    <citation type="submission" date="2006-09" db="EMBL/GenBank/DDBJ databases">
        <authorList>
            <consortium name="NIH - Xenopus Gene Collection (XGC) project"/>
        </authorList>
    </citation>
    <scope>NUCLEOTIDE SEQUENCE [LARGE SCALE MRNA]</scope>
    <source>
        <tissue>Embryo</tissue>
    </source>
</reference>
<comment type="function">
    <text evidence="1">Metallophosphoesterase that catalyzes the removal of a side-chain ethanolamine-phosphate (EtNP) from the second mannose of the GPI-anchor protein intermediate. Participates in the glycan remodeling steps of GPI-anchor maturation to allow an efficient transport of GPI-anchor proteins from the endoplasmic reticulum to the Golgi.</text>
</comment>
<comment type="cofactor">
    <cofactor evidence="1">
        <name>Mn(2+)</name>
        <dbReference type="ChEBI" id="CHEBI:29035"/>
    </cofactor>
    <text evidence="1">Binds 2 manganese ions per subunit.</text>
</comment>
<comment type="subcellular location">
    <subcellularLocation>
        <location evidence="1">Endoplasmic reticulum-Golgi intermediate compartment membrane</location>
        <topology evidence="2">Multi-pass membrane protein</topology>
    </subcellularLocation>
    <text evidence="1">Also localizes to endoplasmic reticulum exit site.</text>
</comment>
<comment type="similarity">
    <text evidence="3">Belongs to the metallophosphoesterase superfamily. MPPE1 family.</text>
</comment>
<sequence length="405" mass="46756">MMFKHLVPLRNGFNKERTSRLKARLFFLSTIFGSILLVFFFCEFLVYYLVIVKCSWPEVKGAHKEDSTPVLKVMFLADTHLLGEIRGHWLDKLRREWQMERSYQSALWLLQPDIVFILGDVFDEGKWSIPQAWSSDVARFQKMFRHPPHTQLIVLVGNHDIGFHYDMTVYKLSRFEKTFNFTSGKLVSPKGINHILSSSFVLLNSMALEGDDCHICRAAEDQLRRISIKLNCSRMREHPDFQKKCKNVEKTPVSAPILLQHYPLYRISDSECTGEDSASPEEKKVLFKEKYDVLSQDASEKLLQLLQPRLILSGHTHSACEVLHQGKIPEISVPSFSWRNRNNPSFIMGSITATKYSLAKCFLPTENTIIYIYCTASVLLTGYVLACLWLCICQRIHSGRKQKPI</sequence>
<evidence type="ECO:0000250" key="1">
    <source>
        <dbReference type="UniProtKB" id="Q53F39"/>
    </source>
</evidence>
<evidence type="ECO:0000255" key="2"/>
<evidence type="ECO:0000305" key="3"/>
<protein>
    <recommendedName>
        <fullName evidence="1">Metallophosphoesterase 1</fullName>
        <ecNumber evidence="1">3.1.-.-</ecNumber>
    </recommendedName>
    <alternativeName>
        <fullName>Post-GPI attachment to proteins factor 5</fullName>
    </alternativeName>
</protein>
<name>MPPE1_XENLA</name>
<organism>
    <name type="scientific">Xenopus laevis</name>
    <name type="common">African clawed frog</name>
    <dbReference type="NCBI Taxonomy" id="8355"/>
    <lineage>
        <taxon>Eukaryota</taxon>
        <taxon>Metazoa</taxon>
        <taxon>Chordata</taxon>
        <taxon>Craniata</taxon>
        <taxon>Vertebrata</taxon>
        <taxon>Euteleostomi</taxon>
        <taxon>Amphibia</taxon>
        <taxon>Batrachia</taxon>
        <taxon>Anura</taxon>
        <taxon>Pipoidea</taxon>
        <taxon>Pipidae</taxon>
        <taxon>Xenopodinae</taxon>
        <taxon>Xenopus</taxon>
        <taxon>Xenopus</taxon>
    </lineage>
</organism>